<protein>
    <recommendedName>
        <fullName evidence="1">3-octaprenyl-4-hydroxybenzoate carboxy-lyase</fullName>
        <ecNumber evidence="1">4.1.1.98</ecNumber>
    </recommendedName>
    <alternativeName>
        <fullName evidence="1">Polyprenyl p-hydroxybenzoate decarboxylase</fullName>
    </alternativeName>
</protein>
<keyword id="KW-1003">Cell membrane</keyword>
<keyword id="KW-0210">Decarboxylase</keyword>
<keyword id="KW-0285">Flavoprotein</keyword>
<keyword id="KW-0288">FMN</keyword>
<keyword id="KW-0456">Lyase</keyword>
<keyword id="KW-0464">Manganese</keyword>
<keyword id="KW-0472">Membrane</keyword>
<keyword id="KW-0479">Metal-binding</keyword>
<keyword id="KW-0831">Ubiquinone biosynthesis</keyword>
<name>UBID_AZOVD</name>
<gene>
    <name evidence="1" type="primary">ubiD</name>
    <name type="ordered locus">Avin_47400</name>
</gene>
<reference key="1">
    <citation type="journal article" date="2009" name="J. Bacteriol.">
        <title>Genome sequence of Azotobacter vinelandii, an obligate aerobe specialized to support diverse anaerobic metabolic processes.</title>
        <authorList>
            <person name="Setubal J.C."/>
            <person name="Dos Santos P."/>
            <person name="Goldman B.S."/>
            <person name="Ertesvaag H."/>
            <person name="Espin G."/>
            <person name="Rubio L.M."/>
            <person name="Valla S."/>
            <person name="Almeida N.F."/>
            <person name="Balasubramanian D."/>
            <person name="Cromes L."/>
            <person name="Curatti L."/>
            <person name="Du Z."/>
            <person name="Godsy E."/>
            <person name="Goodner B."/>
            <person name="Hellner-Burris K."/>
            <person name="Hernandez J.A."/>
            <person name="Houmiel K."/>
            <person name="Imperial J."/>
            <person name="Kennedy C."/>
            <person name="Larson T.J."/>
            <person name="Latreille P."/>
            <person name="Ligon L.S."/>
            <person name="Lu J."/>
            <person name="Maerk M."/>
            <person name="Miller N.M."/>
            <person name="Norton S."/>
            <person name="O'Carroll I.P."/>
            <person name="Paulsen I."/>
            <person name="Raulfs E.C."/>
            <person name="Roemer R."/>
            <person name="Rosser J."/>
            <person name="Segura D."/>
            <person name="Slater S."/>
            <person name="Stricklin S.L."/>
            <person name="Studholme D.J."/>
            <person name="Sun J."/>
            <person name="Viana C.J."/>
            <person name="Wallin E."/>
            <person name="Wang B."/>
            <person name="Wheeler C."/>
            <person name="Zhu H."/>
            <person name="Dean D.R."/>
            <person name="Dixon R."/>
            <person name="Wood D."/>
        </authorList>
    </citation>
    <scope>NUCLEOTIDE SEQUENCE [LARGE SCALE GENOMIC DNA]</scope>
    <source>
        <strain>DJ / ATCC BAA-1303</strain>
    </source>
</reference>
<proteinExistence type="inferred from homology"/>
<sequence length="488" mass="54999">MKYSDLRDFLRALEARGELKRIQTPVSPILEMTEICDRTLRRSGPALLFEKPIGFDMPVLGNLFGTPQRVAFGMGAEDVSELREIGRLLALLKEPEPPKGLKDAWDKLPLFKKVLSMAPKVLKDAPCQEVILEGEDVDLGRLPVQHCWPGDAAPLITWGLTITRGPNKERQNLGIYRQQVLGRNKVIMRWLSHRGGALDYREWCQKHPDRPYPVAVALGADPATILGAVTPVPDTLSEYAFAGLLRGQRTELVKAVGSDLQVPASAEIVLEGHIHPGEMADEGPYGDHTGYYNEVDRFPVFTIERITRRRDAIYHSTYTGRPPDEPAVLGVALNEVFVPILQKQFPEIVDFYLPPEGCSYRMAVVTIRKQYPGHAKRVMLGVWSFLRQFMYTKFVIVTDDDIDARDWNDVIWAITTRMDPKRDTVLIDNTPIDYLDFASPVSGLGSKMGLDATHKWPGETSREWGRAIRQDPAVKQRVDELWPLLGLD</sequence>
<comment type="function">
    <text evidence="1">Catalyzes the decarboxylation of 3-octaprenyl-4-hydroxy benzoate to 2-octaprenylphenol, an intermediate step in ubiquinone biosynthesis.</text>
</comment>
<comment type="catalytic activity">
    <reaction evidence="1">
        <text>a 4-hydroxy-3-(all-trans-polyprenyl)benzoate + H(+) = a 2-(all-trans-polyprenyl)phenol + CO2</text>
        <dbReference type="Rhea" id="RHEA:41680"/>
        <dbReference type="Rhea" id="RHEA-COMP:9514"/>
        <dbReference type="Rhea" id="RHEA-COMP:9516"/>
        <dbReference type="ChEBI" id="CHEBI:1269"/>
        <dbReference type="ChEBI" id="CHEBI:15378"/>
        <dbReference type="ChEBI" id="CHEBI:16526"/>
        <dbReference type="ChEBI" id="CHEBI:78396"/>
        <dbReference type="EC" id="4.1.1.98"/>
    </reaction>
</comment>
<comment type="cofactor">
    <cofactor evidence="1">
        <name>prenylated FMN</name>
        <dbReference type="ChEBI" id="CHEBI:87746"/>
    </cofactor>
    <text evidence="1">Binds 1 prenylated FMN per subunit.</text>
</comment>
<comment type="cofactor">
    <cofactor evidence="1">
        <name>Mn(2+)</name>
        <dbReference type="ChEBI" id="CHEBI:29035"/>
    </cofactor>
</comment>
<comment type="pathway">
    <text evidence="1">Cofactor biosynthesis; ubiquinone biosynthesis.</text>
</comment>
<comment type="subunit">
    <text evidence="1">Homohexamer.</text>
</comment>
<comment type="subcellular location">
    <subcellularLocation>
        <location evidence="1">Cell membrane</location>
        <topology evidence="1">Peripheral membrane protein</topology>
    </subcellularLocation>
</comment>
<comment type="similarity">
    <text evidence="1">Belongs to the UbiD family.</text>
</comment>
<organism>
    <name type="scientific">Azotobacter vinelandii (strain DJ / ATCC BAA-1303)</name>
    <dbReference type="NCBI Taxonomy" id="322710"/>
    <lineage>
        <taxon>Bacteria</taxon>
        <taxon>Pseudomonadati</taxon>
        <taxon>Pseudomonadota</taxon>
        <taxon>Gammaproteobacteria</taxon>
        <taxon>Pseudomonadales</taxon>
        <taxon>Pseudomonadaceae</taxon>
        <taxon>Azotobacter</taxon>
    </lineage>
</organism>
<evidence type="ECO:0000255" key="1">
    <source>
        <dbReference type="HAMAP-Rule" id="MF_01636"/>
    </source>
</evidence>
<dbReference type="EC" id="4.1.1.98" evidence="1"/>
<dbReference type="EMBL" id="CP001157">
    <property type="protein sequence ID" value="ACO80845.1"/>
    <property type="molecule type" value="Genomic_DNA"/>
</dbReference>
<dbReference type="RefSeq" id="WP_012703207.1">
    <property type="nucleotide sequence ID" value="NC_012560.1"/>
</dbReference>
<dbReference type="SMR" id="C1DJ26"/>
<dbReference type="STRING" id="322710.Avin_47400"/>
<dbReference type="EnsemblBacteria" id="ACO80845">
    <property type="protein sequence ID" value="ACO80845"/>
    <property type="gene ID" value="Avin_47400"/>
</dbReference>
<dbReference type="GeneID" id="88187615"/>
<dbReference type="KEGG" id="avn:Avin_47400"/>
<dbReference type="eggNOG" id="COG0043">
    <property type="taxonomic scope" value="Bacteria"/>
</dbReference>
<dbReference type="HOGENOM" id="CLU_023348_4_1_6"/>
<dbReference type="OrthoDB" id="9809841at2"/>
<dbReference type="UniPathway" id="UPA00232"/>
<dbReference type="Proteomes" id="UP000002424">
    <property type="component" value="Chromosome"/>
</dbReference>
<dbReference type="GO" id="GO:0005829">
    <property type="term" value="C:cytosol"/>
    <property type="evidence" value="ECO:0007669"/>
    <property type="project" value="TreeGrafter"/>
</dbReference>
<dbReference type="GO" id="GO:0005886">
    <property type="term" value="C:plasma membrane"/>
    <property type="evidence" value="ECO:0007669"/>
    <property type="project" value="UniProtKB-SubCell"/>
</dbReference>
<dbReference type="GO" id="GO:0008694">
    <property type="term" value="F:3-octaprenyl-4-hydroxybenzoate carboxy-lyase activity"/>
    <property type="evidence" value="ECO:0007669"/>
    <property type="project" value="UniProtKB-UniRule"/>
</dbReference>
<dbReference type="GO" id="GO:0046872">
    <property type="term" value="F:metal ion binding"/>
    <property type="evidence" value="ECO:0007669"/>
    <property type="project" value="UniProtKB-KW"/>
</dbReference>
<dbReference type="GO" id="GO:0006744">
    <property type="term" value="P:ubiquinone biosynthetic process"/>
    <property type="evidence" value="ECO:0007669"/>
    <property type="project" value="UniProtKB-UniRule"/>
</dbReference>
<dbReference type="FunFam" id="1.20.5.570:FF:000001">
    <property type="entry name" value="3-octaprenyl-4-hydroxybenzoate carboxy-lyase"/>
    <property type="match status" value="1"/>
</dbReference>
<dbReference type="FunFam" id="3.40.1670.10:FF:000001">
    <property type="entry name" value="3-octaprenyl-4-hydroxybenzoate carboxy-lyase"/>
    <property type="match status" value="1"/>
</dbReference>
<dbReference type="Gene3D" id="1.20.5.570">
    <property type="entry name" value="Single helix bin"/>
    <property type="match status" value="1"/>
</dbReference>
<dbReference type="Gene3D" id="3.40.1670.10">
    <property type="entry name" value="UbiD C-terminal domain-like"/>
    <property type="match status" value="1"/>
</dbReference>
<dbReference type="HAMAP" id="MF_01636">
    <property type="entry name" value="UbiD"/>
    <property type="match status" value="1"/>
</dbReference>
<dbReference type="InterPro" id="IPR002830">
    <property type="entry name" value="UbiD"/>
</dbReference>
<dbReference type="InterPro" id="IPR049381">
    <property type="entry name" value="UbiD-like_C"/>
</dbReference>
<dbReference type="InterPro" id="IPR049383">
    <property type="entry name" value="UbiD-like_N"/>
</dbReference>
<dbReference type="InterPro" id="IPR023677">
    <property type="entry name" value="UbiD_bacteria"/>
</dbReference>
<dbReference type="InterPro" id="IPR048304">
    <property type="entry name" value="UbiD_Rift_dom"/>
</dbReference>
<dbReference type="NCBIfam" id="NF008175">
    <property type="entry name" value="PRK10922.1"/>
    <property type="match status" value="1"/>
</dbReference>
<dbReference type="NCBIfam" id="TIGR00148">
    <property type="entry name" value="UbiD family decarboxylase"/>
    <property type="match status" value="1"/>
</dbReference>
<dbReference type="PANTHER" id="PTHR30108">
    <property type="entry name" value="3-OCTAPRENYL-4-HYDROXYBENZOATE CARBOXY-LYASE-RELATED"/>
    <property type="match status" value="1"/>
</dbReference>
<dbReference type="PANTHER" id="PTHR30108:SF17">
    <property type="entry name" value="FERULIC ACID DECARBOXYLASE 1"/>
    <property type="match status" value="1"/>
</dbReference>
<dbReference type="Pfam" id="PF01977">
    <property type="entry name" value="UbiD"/>
    <property type="match status" value="1"/>
</dbReference>
<dbReference type="Pfam" id="PF20696">
    <property type="entry name" value="UbiD_C"/>
    <property type="match status" value="1"/>
</dbReference>
<dbReference type="Pfam" id="PF20695">
    <property type="entry name" value="UbiD_N"/>
    <property type="match status" value="1"/>
</dbReference>
<dbReference type="SUPFAM" id="SSF50475">
    <property type="entry name" value="FMN-binding split barrel"/>
    <property type="match status" value="1"/>
</dbReference>
<dbReference type="SUPFAM" id="SSF143968">
    <property type="entry name" value="UbiD C-terminal domain-like"/>
    <property type="match status" value="1"/>
</dbReference>
<accession>C1DJ26</accession>
<feature type="chain" id="PRO_1000215807" description="3-octaprenyl-4-hydroxybenzoate carboxy-lyase">
    <location>
        <begin position="1"/>
        <end position="488"/>
    </location>
</feature>
<feature type="active site" description="Proton donor" evidence="1">
    <location>
        <position position="287"/>
    </location>
</feature>
<feature type="binding site" evidence="1">
    <location>
        <position position="172"/>
    </location>
    <ligand>
        <name>Mn(2+)</name>
        <dbReference type="ChEBI" id="CHEBI:29035"/>
    </ligand>
</feature>
<feature type="binding site" evidence="1">
    <location>
        <begin position="175"/>
        <end position="177"/>
    </location>
    <ligand>
        <name>prenylated FMN</name>
        <dbReference type="ChEBI" id="CHEBI:87746"/>
    </ligand>
</feature>
<feature type="binding site" evidence="1">
    <location>
        <begin position="189"/>
        <end position="191"/>
    </location>
    <ligand>
        <name>prenylated FMN</name>
        <dbReference type="ChEBI" id="CHEBI:87746"/>
    </ligand>
</feature>
<feature type="binding site" evidence="1">
    <location>
        <begin position="194"/>
        <end position="195"/>
    </location>
    <ligand>
        <name>prenylated FMN</name>
        <dbReference type="ChEBI" id="CHEBI:87746"/>
    </ligand>
</feature>
<feature type="binding site" evidence="1">
    <location>
        <position position="238"/>
    </location>
    <ligand>
        <name>Mn(2+)</name>
        <dbReference type="ChEBI" id="CHEBI:29035"/>
    </ligand>
</feature>